<feature type="signal peptide">
    <location>
        <begin position="1"/>
        <end position="23"/>
    </location>
</feature>
<feature type="propeptide" id="PRO_0000028488">
    <location>
        <begin position="24"/>
        <end position="40"/>
    </location>
</feature>
<feature type="chain" id="PRO_0000028489" description="Vitamin K-dependent protein Z" evidence="9">
    <location>
        <begin position="41"/>
        <end position="400"/>
    </location>
</feature>
<feature type="domain" description="Gla" evidence="5">
    <location>
        <begin position="41"/>
        <end position="86"/>
    </location>
</feature>
<feature type="domain" description="EGF-like 1" evidence="3">
    <location>
        <begin position="87"/>
        <end position="123"/>
    </location>
</feature>
<feature type="domain" description="EGF-like 2" evidence="3">
    <location>
        <begin position="125"/>
        <end position="166"/>
    </location>
</feature>
<feature type="domain" description="Peptidase S1" evidence="4">
    <location>
        <begin position="175"/>
        <end position="400"/>
    </location>
</feature>
<feature type="modified residue" description="4-carboxyglutamate" evidence="5 9">
    <location>
        <position position="47"/>
    </location>
</feature>
<feature type="modified residue" description="4-carboxyglutamate" evidence="5 9">
    <location>
        <position position="48"/>
    </location>
</feature>
<feature type="modified residue" description="4-carboxyglutamate" evidence="5 9">
    <location>
        <position position="51"/>
    </location>
</feature>
<feature type="modified residue" description="4-carboxyglutamate" evidence="5 9">
    <location>
        <position position="55"/>
    </location>
</feature>
<feature type="modified residue" description="4-carboxyglutamate" evidence="5 9">
    <location>
        <position position="57"/>
    </location>
</feature>
<feature type="modified residue" description="4-carboxyglutamate" evidence="5 9">
    <location>
        <position position="60"/>
    </location>
</feature>
<feature type="modified residue" description="4-carboxyglutamate" evidence="5 9">
    <location>
        <position position="61"/>
    </location>
</feature>
<feature type="modified residue" description="4-carboxyglutamate" evidence="5 9">
    <location>
        <position position="66"/>
    </location>
</feature>
<feature type="modified residue" description="4-carboxyglutamate" evidence="5 9">
    <location>
        <position position="67"/>
    </location>
</feature>
<feature type="modified residue" description="4-carboxyglutamate" evidence="5 9">
    <location>
        <position position="70"/>
    </location>
</feature>
<feature type="modified residue" description="4-carboxyglutamate" evidence="5 9">
    <location>
        <position position="73"/>
    </location>
</feature>
<feature type="modified residue" description="4-carboxyglutamate" evidence="5 9">
    <location>
        <position position="75"/>
    </location>
</feature>
<feature type="modified residue" description="4-carboxyglutamate" evidence="5 9">
    <location>
        <position position="80"/>
    </location>
</feature>
<feature type="modified residue" description="(3R)-3-hydroxyaspartate" evidence="1">
    <location>
        <position position="104"/>
    </location>
</feature>
<feature type="glycosylation site" description="O-linked (Glc...) serine" evidence="8 10">
    <location>
        <position position="93"/>
    </location>
</feature>
<feature type="glycosylation site" description="N-linked (GlcNAc...) asparagine" evidence="7">
    <location>
        <position position="99"/>
    </location>
</feature>
<feature type="glycosylation site" description="N-linked (GlcNAc...) asparagine" evidence="7">
    <location>
        <position position="225"/>
    </location>
</feature>
<feature type="glycosylation site" description="N-linked (GlcNAc...) asparagine" evidence="6 7">
    <location>
        <position position="233"/>
    </location>
</feature>
<feature type="glycosylation site" description="N-linked (GlcNAc...) asparagine" evidence="2">
    <location>
        <position position="306"/>
    </location>
</feature>
<feature type="glycosylation site" description="N-linked (GlcNAc...) asparagine" evidence="7">
    <location>
        <position position="332"/>
    </location>
</feature>
<feature type="disulfide bond" evidence="1">
    <location>
        <begin position="58"/>
        <end position="63"/>
    </location>
</feature>
<feature type="disulfide bond">
    <location>
        <begin position="91"/>
        <end position="102"/>
    </location>
</feature>
<feature type="disulfide bond">
    <location>
        <begin position="96"/>
        <end position="111"/>
    </location>
</feature>
<feature type="disulfide bond">
    <location>
        <begin position="113"/>
        <end position="122"/>
    </location>
</feature>
<feature type="disulfide bond">
    <location>
        <begin position="129"/>
        <end position="141"/>
    </location>
</feature>
<feature type="disulfide bond">
    <location>
        <begin position="137"/>
        <end position="150"/>
    </location>
</feature>
<feature type="disulfide bond">
    <location>
        <begin position="152"/>
        <end position="165"/>
    </location>
</feature>
<feature type="disulfide bond">
    <location>
        <begin position="203"/>
        <end position="219"/>
    </location>
</feature>
<feature type="disulfide bond">
    <location>
        <begin position="327"/>
        <end position="341"/>
    </location>
</feature>
<feature type="splice variant" id="VSP_005415" description="In isoform 2." evidence="12">
    <original>V</original>
    <variation>ATSLKERHGLHSDSACTGVQESL</variation>
    <location>
        <position position="24"/>
    </location>
</feature>
<feature type="sequence variant" id="VAR_013124" description="In dbSNP:rs3024778." evidence="11">
    <original>E</original>
    <variation>K</variation>
    <location>
        <position position="70"/>
    </location>
</feature>
<feature type="sequence variant" id="VAR_013125" description="In dbSNP:rs3024772." evidence="11">
    <original>R</original>
    <variation>H</variation>
    <location>
        <position position="295"/>
    </location>
</feature>
<feature type="turn" evidence="14">
    <location>
        <begin position="97"/>
        <end position="99"/>
    </location>
</feature>
<feature type="strand" evidence="14">
    <location>
        <begin position="106"/>
        <end position="108"/>
    </location>
</feature>
<feature type="strand" evidence="14">
    <location>
        <begin position="114"/>
        <end position="116"/>
    </location>
</feature>
<feature type="strand" evidence="14">
    <location>
        <begin position="119"/>
        <end position="122"/>
    </location>
</feature>
<feature type="strand" evidence="14">
    <location>
        <begin position="126"/>
        <end position="128"/>
    </location>
</feature>
<feature type="strand" evidence="13">
    <location>
        <begin position="134"/>
        <end position="136"/>
    </location>
</feature>
<feature type="strand" evidence="13">
    <location>
        <begin position="138"/>
        <end position="140"/>
    </location>
</feature>
<feature type="strand" evidence="14">
    <location>
        <begin position="145"/>
        <end position="147"/>
    </location>
</feature>
<feature type="strand" evidence="14">
    <location>
        <begin position="149"/>
        <end position="151"/>
    </location>
</feature>
<feature type="strand" evidence="13">
    <location>
        <begin position="156"/>
        <end position="158"/>
    </location>
</feature>
<feature type="strand" evidence="13">
    <location>
        <begin position="165"/>
        <end position="167"/>
    </location>
</feature>
<feature type="strand" evidence="13">
    <location>
        <begin position="191"/>
        <end position="195"/>
    </location>
</feature>
<feature type="strand" evidence="14">
    <location>
        <begin position="197"/>
        <end position="199"/>
    </location>
</feature>
<feature type="strand" evidence="13">
    <location>
        <begin position="201"/>
        <end position="209"/>
    </location>
</feature>
<feature type="strand" evidence="13">
    <location>
        <begin position="212"/>
        <end position="215"/>
    </location>
</feature>
<feature type="helix" evidence="13">
    <location>
        <begin position="217"/>
        <end position="220"/>
    </location>
</feature>
<feature type="strand" evidence="13">
    <location>
        <begin position="227"/>
        <end position="230"/>
    </location>
</feature>
<feature type="strand" evidence="13">
    <location>
        <begin position="240"/>
        <end position="249"/>
    </location>
</feature>
<feature type="turn" evidence="13">
    <location>
        <begin position="255"/>
        <end position="258"/>
    </location>
</feature>
<feature type="strand" evidence="13">
    <location>
        <begin position="263"/>
        <end position="269"/>
    </location>
</feature>
<feature type="turn" evidence="13">
    <location>
        <begin position="273"/>
        <end position="276"/>
    </location>
</feature>
<feature type="helix" evidence="13">
    <location>
        <begin position="285"/>
        <end position="290"/>
    </location>
</feature>
<feature type="turn" evidence="13">
    <location>
        <begin position="291"/>
        <end position="295"/>
    </location>
</feature>
<feature type="strand" evidence="13">
    <location>
        <begin position="298"/>
        <end position="302"/>
    </location>
</feature>
<feature type="strand" evidence="14">
    <location>
        <begin position="309"/>
        <end position="311"/>
    </location>
</feature>
<feature type="strand" evidence="13">
    <location>
        <begin position="315"/>
        <end position="322"/>
    </location>
</feature>
<feature type="helix" evidence="13">
    <location>
        <begin position="324"/>
        <end position="331"/>
    </location>
</feature>
<feature type="strand" evidence="13">
    <location>
        <begin position="339"/>
        <end position="343"/>
    </location>
</feature>
<feature type="helix" evidence="13">
    <location>
        <begin position="348"/>
        <end position="350"/>
    </location>
</feature>
<feature type="strand" evidence="13">
    <location>
        <begin position="356"/>
        <end position="360"/>
    </location>
</feature>
<feature type="strand" evidence="13">
    <location>
        <begin position="365"/>
        <end position="371"/>
    </location>
</feature>
<feature type="helix" evidence="13">
    <location>
        <begin position="376"/>
        <end position="378"/>
    </location>
</feature>
<feature type="strand" evidence="13">
    <location>
        <begin position="380"/>
        <end position="387"/>
    </location>
</feature>
<feature type="helix" evidence="13">
    <location>
        <begin position="388"/>
        <end position="391"/>
    </location>
</feature>
<feature type="helix" evidence="13">
    <location>
        <begin position="392"/>
        <end position="399"/>
    </location>
</feature>
<accession>P22891</accession>
<accession>A6NMB4</accession>
<accession>Q15213</accession>
<accession>Q5JVF5</accession>
<accession>Q5JVF6</accession>
<comment type="function">
    <text>Appears to assist hemostasis by binding thrombin and promoting its association with phospholipid vesicles. Inhibits activity of the coagulation protease factor Xa in the presence of SERPINA10, calcium and phospholipids.</text>
</comment>
<comment type="subunit">
    <text evidence="6 7">Interacts with SERPINA10.</text>
</comment>
<comment type="interaction">
    <interactant intactId="EBI-22220337">
        <id>P22891</id>
    </interactant>
    <interactant intactId="EBI-3941758">
        <id>Q9UK55</id>
        <label>SERPINA10</label>
    </interactant>
    <organismsDiffer>false</organismsDiffer>
    <experiments>7</experiments>
</comment>
<comment type="subcellular location">
    <subcellularLocation>
        <location>Secreted</location>
    </subcellularLocation>
</comment>
<comment type="alternative products">
    <event type="alternative splicing"/>
    <isoform>
        <id>P22891-1</id>
        <name>1</name>
        <sequence type="displayed"/>
    </isoform>
    <isoform>
        <id>P22891-2</id>
        <name>2</name>
        <sequence type="described" ref="VSP_005415"/>
    </isoform>
</comment>
<comment type="tissue specificity">
    <text>Plasma.</text>
</comment>
<comment type="PTM">
    <text evidence="1">The iron and 2-oxoglutarate dependent 3-hydroxylation of aspartate and asparagine is (R) stereospecific within EGF domains.</text>
</comment>
<comment type="similarity">
    <text evidence="4">Belongs to the peptidase S1 family.</text>
</comment>
<comment type="caution">
    <text evidence="12">Although related to peptidase S1 family vitamin K-dependent clotting factors, it has lost two of the essential catalytic residues and therefore lacks protease activity.</text>
</comment>
<protein>
    <recommendedName>
        <fullName>Vitamin K-dependent protein Z</fullName>
    </recommendedName>
</protein>
<reference key="1">
    <citation type="journal article" date="1990" name="Biochem. Biophys. Res. Commun.">
        <title>Amino acid sequence of human protein Z, a vitamin K-dependent plasma glycoprotein.</title>
        <authorList>
            <person name="Ichinose A."/>
            <person name="Takeya H."/>
            <person name="Espling E."/>
            <person name="Iwanaga S."/>
            <person name="Kisiel W."/>
            <person name="Davie E.W."/>
        </authorList>
    </citation>
    <scope>NUCLEOTIDE SEQUENCE [MRNA]</scope>
    <scope>GAMMA-CARBOXYGLUTAMATION AT GLU-47; GLU-48; GLU-51; GLU-55; GLU-57; GLU-60; GLU-61; GLU-66; GLU-67; GLU-70; GLU-73; GLU-75 AND GLU-80</scope>
    <scope>PARTIAL PROTEIN SEQUENCE</scope>
    <source>
        <tissue>Liver</tissue>
    </source>
</reference>
<reference key="2">
    <citation type="journal article" date="1998" name="Biochemistry">
        <title>The gene for human protein Z is localized to chromosome 13 at band q34 and is coded by eight regular exons and one alternative exon.</title>
        <authorList>
            <person name="Fujimaki K."/>
            <person name="Yamazaki T."/>
            <person name="Taniwaki M."/>
            <person name="Ichinose A."/>
        </authorList>
    </citation>
    <scope>NUCLEOTIDE SEQUENCE [GENOMIC DNA]</scope>
    <scope>ALTERNATIVE SPLICING</scope>
</reference>
<reference key="3">
    <citation type="submission" date="2001-10" db="EMBL/GenBank/DDBJ databases">
        <authorList>
            <consortium name="SeattleSNPs variation discovery resource"/>
        </authorList>
    </citation>
    <scope>NUCLEOTIDE SEQUENCE [GENOMIC DNA]</scope>
    <scope>VARIANTS LYS-70 AND HIS-295</scope>
</reference>
<reference key="4">
    <citation type="submission" date="2007-02" db="EMBL/GenBank/DDBJ databases">
        <authorList>
            <consortium name="NHLBI resequencing and genotyping service (RS&amp;G)"/>
        </authorList>
    </citation>
    <scope>NUCLEOTIDE SEQUENCE [GENOMIC DNA]</scope>
</reference>
<reference key="5">
    <citation type="journal article" date="2004" name="Nature">
        <title>The DNA sequence and analysis of human chromosome 13.</title>
        <authorList>
            <person name="Dunham A."/>
            <person name="Matthews L.H."/>
            <person name="Burton J."/>
            <person name="Ashurst J.L."/>
            <person name="Howe K.L."/>
            <person name="Ashcroft K.J."/>
            <person name="Beare D.M."/>
            <person name="Burford D.C."/>
            <person name="Hunt S.E."/>
            <person name="Griffiths-Jones S."/>
            <person name="Jones M.C."/>
            <person name="Keenan S.J."/>
            <person name="Oliver K."/>
            <person name="Scott C.E."/>
            <person name="Ainscough R."/>
            <person name="Almeida J.P."/>
            <person name="Ambrose K.D."/>
            <person name="Andrews D.T."/>
            <person name="Ashwell R.I.S."/>
            <person name="Babbage A.K."/>
            <person name="Bagguley C.L."/>
            <person name="Bailey J."/>
            <person name="Bannerjee R."/>
            <person name="Barlow K.F."/>
            <person name="Bates K."/>
            <person name="Beasley H."/>
            <person name="Bird C.P."/>
            <person name="Bray-Allen S."/>
            <person name="Brown A.J."/>
            <person name="Brown J.Y."/>
            <person name="Burrill W."/>
            <person name="Carder C."/>
            <person name="Carter N.P."/>
            <person name="Chapman J.C."/>
            <person name="Clamp M.E."/>
            <person name="Clark S.Y."/>
            <person name="Clarke G."/>
            <person name="Clee C.M."/>
            <person name="Clegg S.C."/>
            <person name="Cobley V."/>
            <person name="Collins J.E."/>
            <person name="Corby N."/>
            <person name="Coville G.J."/>
            <person name="Deloukas P."/>
            <person name="Dhami P."/>
            <person name="Dunham I."/>
            <person name="Dunn M."/>
            <person name="Earthrowl M.E."/>
            <person name="Ellington A.G."/>
            <person name="Faulkner L."/>
            <person name="Frankish A.G."/>
            <person name="Frankland J."/>
            <person name="French L."/>
            <person name="Garner P."/>
            <person name="Garnett J."/>
            <person name="Gilbert J.G.R."/>
            <person name="Gilson C.J."/>
            <person name="Ghori J."/>
            <person name="Grafham D.V."/>
            <person name="Gribble S.M."/>
            <person name="Griffiths C."/>
            <person name="Hall R.E."/>
            <person name="Hammond S."/>
            <person name="Harley J.L."/>
            <person name="Hart E.A."/>
            <person name="Heath P.D."/>
            <person name="Howden P.J."/>
            <person name="Huckle E.J."/>
            <person name="Hunt P.J."/>
            <person name="Hunt A.R."/>
            <person name="Johnson C."/>
            <person name="Johnson D."/>
            <person name="Kay M."/>
            <person name="Kimberley A.M."/>
            <person name="King A."/>
            <person name="Laird G.K."/>
            <person name="Langford C.J."/>
            <person name="Lawlor S."/>
            <person name="Leongamornlert D.A."/>
            <person name="Lloyd D.M."/>
            <person name="Lloyd C."/>
            <person name="Loveland J.E."/>
            <person name="Lovell J."/>
            <person name="Martin S."/>
            <person name="Mashreghi-Mohammadi M."/>
            <person name="McLaren S.J."/>
            <person name="McMurray A."/>
            <person name="Milne S."/>
            <person name="Moore M.J.F."/>
            <person name="Nickerson T."/>
            <person name="Palmer S.A."/>
            <person name="Pearce A.V."/>
            <person name="Peck A.I."/>
            <person name="Pelan S."/>
            <person name="Phillimore B."/>
            <person name="Porter K.M."/>
            <person name="Rice C.M."/>
            <person name="Searle S."/>
            <person name="Sehra H.K."/>
            <person name="Shownkeen R."/>
            <person name="Skuce C.D."/>
            <person name="Smith M."/>
            <person name="Steward C.A."/>
            <person name="Sycamore N."/>
            <person name="Tester J."/>
            <person name="Thomas D.W."/>
            <person name="Tracey A."/>
            <person name="Tromans A."/>
            <person name="Tubby B."/>
            <person name="Wall M."/>
            <person name="Wallis J.M."/>
            <person name="West A.P."/>
            <person name="Whitehead S.L."/>
            <person name="Willey D.L."/>
            <person name="Wilming L."/>
            <person name="Wray P.W."/>
            <person name="Wright M.W."/>
            <person name="Young L."/>
            <person name="Coulson A."/>
            <person name="Durbin R.M."/>
            <person name="Hubbard T."/>
            <person name="Sulston J.E."/>
            <person name="Beck S."/>
            <person name="Bentley D.R."/>
            <person name="Rogers J."/>
            <person name="Ross M.T."/>
        </authorList>
    </citation>
    <scope>NUCLEOTIDE SEQUENCE [LARGE SCALE GENOMIC DNA]</scope>
</reference>
<reference key="6">
    <citation type="submission" date="2005-07" db="EMBL/GenBank/DDBJ databases">
        <authorList>
            <person name="Mural R.J."/>
            <person name="Istrail S."/>
            <person name="Sutton G.G."/>
            <person name="Florea L."/>
            <person name="Halpern A.L."/>
            <person name="Mobarry C.M."/>
            <person name="Lippert R."/>
            <person name="Walenz B."/>
            <person name="Shatkay H."/>
            <person name="Dew I."/>
            <person name="Miller J.R."/>
            <person name="Flanigan M.J."/>
            <person name="Edwards N.J."/>
            <person name="Bolanos R."/>
            <person name="Fasulo D."/>
            <person name="Halldorsson B.V."/>
            <person name="Hannenhalli S."/>
            <person name="Turner R."/>
            <person name="Yooseph S."/>
            <person name="Lu F."/>
            <person name="Nusskern D.R."/>
            <person name="Shue B.C."/>
            <person name="Zheng X.H."/>
            <person name="Zhong F."/>
            <person name="Delcher A.L."/>
            <person name="Huson D.H."/>
            <person name="Kravitz S.A."/>
            <person name="Mouchard L."/>
            <person name="Reinert K."/>
            <person name="Remington K.A."/>
            <person name="Clark A.G."/>
            <person name="Waterman M.S."/>
            <person name="Eichler E.E."/>
            <person name="Adams M.D."/>
            <person name="Hunkapiller M.W."/>
            <person name="Myers E.W."/>
            <person name="Venter J.C."/>
        </authorList>
    </citation>
    <scope>NUCLEOTIDE SEQUENCE [LARGE SCALE GENOMIC DNA]</scope>
</reference>
<reference key="7">
    <citation type="journal article" date="2004" name="Genome Res.">
        <title>The status, quality, and expansion of the NIH full-length cDNA project: the Mammalian Gene Collection (MGC).</title>
        <authorList>
            <consortium name="The MGC Project Team"/>
        </authorList>
    </citation>
    <scope>NUCLEOTIDE SEQUENCE [LARGE SCALE MRNA] (ISOFORM 1)</scope>
</reference>
<reference key="8">
    <citation type="journal article" date="1990" name="Biochem. Biophys. Res. Commun.">
        <title>Primary structure of vitamin K-dependent human protein Z.</title>
        <authorList>
            <person name="Sejima H."/>
            <person name="Hayashi T."/>
            <person name="Deyashiki Y."/>
            <person name="Nishioka J."/>
            <person name="Suzuki K."/>
        </authorList>
    </citation>
    <scope>NUCLEOTIDE SEQUENCE [MRNA] OF 81-400</scope>
    <scope>PROTEIN SEQUENCE OF 63-103</scope>
</reference>
<reference key="9">
    <citation type="journal article" date="1989" name="J. Biol. Chem.">
        <title>Identification of a disaccharide (Xyl-Glc) and a trisaccharide (Xyl2-Glc) O-glycosidically linked to a serine residue in the first epidermal growth factor-like domain of human factors VII and IX and protein Z and bovine protein Z.</title>
        <authorList>
            <person name="Nishimura H."/>
            <person name="Kawabata S."/>
            <person name="Kisiel W."/>
            <person name="Hase S."/>
            <person name="Ikenaka T."/>
            <person name="Takao T."/>
            <person name="Shimonishi Y."/>
            <person name="Iwanaga S."/>
        </authorList>
    </citation>
    <scope>GLYCOSYLATION AT SER-93</scope>
    <scope>STRUCTURE OF CARBOHYDRATE ON SER-93</scope>
</reference>
<reference key="10">
    <citation type="journal article" date="1990" name="Adv. Exp. Med. Biol.">
        <title>A new trisaccharide sugar chain linked to a serine residue in the first EGF-like domain of clotting factors VII and IX and protein Z.</title>
        <authorList>
            <person name="Iwanaga S."/>
            <person name="Nishimura H."/>
            <person name="Kawabata S."/>
            <person name="Kisiel W."/>
            <person name="Hase S."/>
            <person name="Ikenaka T."/>
        </authorList>
    </citation>
    <scope>GLYCOSYLATION AT SER-93</scope>
    <scope>STRUCTURE OF CARBOHYDRATE ON SER-93</scope>
</reference>
<reference key="11">
    <citation type="journal article" date="2009" name="Blood">
        <title>Crystal structure of protein Z-dependent inhibitor complex shows how protein Z functions as a cofactor in the membrane inhibition of factor X.</title>
        <authorList>
            <person name="Wei Z."/>
            <person name="Yan Y."/>
            <person name="Carrell R.W."/>
            <person name="Zhou A."/>
        </authorList>
    </citation>
    <scope>X-RAY CRYSTALLOGRAPHY (2.3 ANGSTROMS) OF 125-400 IN COMPLEX WITH SERPINA10</scope>
    <scope>GLYCOSYLATION AT ASN-233</scope>
    <scope>DISULFIDE BONDS</scope>
    <scope>SUBUNIT</scope>
</reference>
<reference key="12">
    <citation type="journal article" date="2010" name="J. Biol. Chem.">
        <title>Basis for the specificity and activation of the serpin protein Z-dependent proteinase inhibitor (ZPI) as an inhibitor of membrane-associated factor Xa.</title>
        <authorList>
            <person name="Huang X."/>
            <person name="Dementiev A."/>
            <person name="Olson S.T."/>
            <person name="Gettins P.G."/>
        </authorList>
    </citation>
    <scope>X-RAY CRYSTALLOGRAPHY (3.26 ANGSTROMS) OF 84-400 IN COMPLEX WITH SERPINA10</scope>
    <scope>GLYCOSYLATION AT ASN-99; ASN-225; ASN-233 AND ASN-332</scope>
    <scope>DISULFIDE BONDS</scope>
    <scope>SUBUNIT</scope>
</reference>
<dbReference type="EMBL" id="M55670">
    <property type="protein sequence ID" value="AAA36500.1"/>
    <property type="molecule type" value="mRNA"/>
</dbReference>
<dbReference type="EMBL" id="M55671">
    <property type="protein sequence ID" value="AAA36501.1"/>
    <property type="molecule type" value="mRNA"/>
</dbReference>
<dbReference type="EMBL" id="AB033749">
    <property type="protein sequence ID" value="BAA85763.1"/>
    <property type="molecule type" value="Genomic_DNA"/>
</dbReference>
<dbReference type="EMBL" id="AB033749">
    <property type="protein sequence ID" value="BAA85764.1"/>
    <property type="molecule type" value="Genomic_DNA"/>
</dbReference>
<dbReference type="EMBL" id="AF440358">
    <property type="protein sequence ID" value="AAL27631.1"/>
    <property type="molecule type" value="Genomic_DNA"/>
</dbReference>
<dbReference type="EMBL" id="EF445049">
    <property type="protein sequence ID" value="ACA06105.1"/>
    <property type="molecule type" value="Genomic_DNA"/>
</dbReference>
<dbReference type="EMBL" id="AL137002">
    <property type="status" value="NOT_ANNOTATED_CDS"/>
    <property type="molecule type" value="Genomic_DNA"/>
</dbReference>
<dbReference type="EMBL" id="CH471085">
    <property type="protein sequence ID" value="EAX09186.1"/>
    <property type="molecule type" value="Genomic_DNA"/>
</dbReference>
<dbReference type="EMBL" id="CH471085">
    <property type="protein sequence ID" value="EAX09187.1"/>
    <property type="molecule type" value="Genomic_DNA"/>
</dbReference>
<dbReference type="EMBL" id="BC074906">
    <property type="protein sequence ID" value="AAH74906.1"/>
    <property type="molecule type" value="mRNA"/>
</dbReference>
<dbReference type="EMBL" id="BC074907">
    <property type="protein sequence ID" value="AAH74907.1"/>
    <property type="molecule type" value="mRNA"/>
</dbReference>
<dbReference type="EMBL" id="M59303">
    <property type="protein sequence ID" value="AAA36499.1"/>
    <property type="molecule type" value="mRNA"/>
</dbReference>
<dbReference type="CCDS" id="CCDS58300.1">
    <molecule id="P22891-2"/>
</dbReference>
<dbReference type="CCDS" id="CCDS9531.1">
    <molecule id="P22891-1"/>
</dbReference>
<dbReference type="PIR" id="A36244">
    <property type="entry name" value="KXHUZ"/>
</dbReference>
<dbReference type="RefSeq" id="NP_001243063.1">
    <molecule id="P22891-2"/>
    <property type="nucleotide sequence ID" value="NM_001256134.2"/>
</dbReference>
<dbReference type="RefSeq" id="NP_003882.1">
    <molecule id="P22891-1"/>
    <property type="nucleotide sequence ID" value="NM_003891.3"/>
</dbReference>
<dbReference type="PDB" id="3F1S">
    <property type="method" value="X-ray"/>
    <property type="resolution" value="2.30 A"/>
    <property type="chains" value="B=125-400"/>
</dbReference>
<dbReference type="PDB" id="3H5C">
    <property type="method" value="X-ray"/>
    <property type="resolution" value="3.26 A"/>
    <property type="chains" value="B=84-400"/>
</dbReference>
<dbReference type="PDBsum" id="3F1S"/>
<dbReference type="PDBsum" id="3H5C"/>
<dbReference type="SMR" id="P22891"/>
<dbReference type="BioGRID" id="114382">
    <property type="interactions" value="84"/>
</dbReference>
<dbReference type="FunCoup" id="P22891">
    <property type="interactions" value="85"/>
</dbReference>
<dbReference type="IntAct" id="P22891">
    <property type="interactions" value="33"/>
</dbReference>
<dbReference type="STRING" id="9606.ENSP00000344458"/>
<dbReference type="MEROPS" id="S01.979"/>
<dbReference type="GlyConnect" id="621">
    <property type="glycosylation" value="1 O-Glc glycan, 1 O-Linked glycan"/>
</dbReference>
<dbReference type="GlyCosmos" id="P22891">
    <property type="glycosylation" value="6 sites, 2 glycans"/>
</dbReference>
<dbReference type="GlyGen" id="P22891">
    <property type="glycosylation" value="7 sites, 1 O-linked glycan (1 site)"/>
</dbReference>
<dbReference type="iPTMnet" id="P22891"/>
<dbReference type="PhosphoSitePlus" id="P22891"/>
<dbReference type="BioMuta" id="PROZ"/>
<dbReference type="DMDM" id="131092"/>
<dbReference type="CPTAC" id="non-CPTAC-2706"/>
<dbReference type="MassIVE" id="P22891"/>
<dbReference type="PaxDb" id="9606-ENSP00000344458"/>
<dbReference type="PeptideAtlas" id="P22891"/>
<dbReference type="ProteomicsDB" id="54045">
    <molecule id="P22891-1"/>
</dbReference>
<dbReference type="ProteomicsDB" id="54046">
    <molecule id="P22891-2"/>
</dbReference>
<dbReference type="Antibodypedia" id="25847">
    <property type="antibodies" value="216 antibodies from 27 providers"/>
</dbReference>
<dbReference type="DNASU" id="8858"/>
<dbReference type="Ensembl" id="ENST00000342783.5">
    <molecule id="P22891-2"/>
    <property type="protein sequence ID" value="ENSP00000344458.4"/>
    <property type="gene ID" value="ENSG00000126231.15"/>
</dbReference>
<dbReference type="Ensembl" id="ENST00000375547.7">
    <molecule id="P22891-1"/>
    <property type="protein sequence ID" value="ENSP00000364697.2"/>
    <property type="gene ID" value="ENSG00000126231.15"/>
</dbReference>
<dbReference type="GeneID" id="8858"/>
<dbReference type="KEGG" id="hsa:8858"/>
<dbReference type="MANE-Select" id="ENST00000375547.7">
    <property type="protein sequence ID" value="ENSP00000364697.2"/>
    <property type="RefSeq nucleotide sequence ID" value="NM_003891.3"/>
    <property type="RefSeq protein sequence ID" value="NP_003882.1"/>
</dbReference>
<dbReference type="UCSC" id="uc001vta.3">
    <molecule id="P22891-1"/>
    <property type="organism name" value="human"/>
</dbReference>
<dbReference type="AGR" id="HGNC:9460"/>
<dbReference type="CTD" id="8858"/>
<dbReference type="DisGeNET" id="8858"/>
<dbReference type="GeneCards" id="PROZ"/>
<dbReference type="HGNC" id="HGNC:9460">
    <property type="gene designation" value="PROZ"/>
</dbReference>
<dbReference type="HPA" id="ENSG00000126231">
    <property type="expression patterns" value="Tissue enriched (liver)"/>
</dbReference>
<dbReference type="MalaCards" id="PROZ"/>
<dbReference type="MIM" id="176895">
    <property type="type" value="gene"/>
</dbReference>
<dbReference type="neXtProt" id="NX_P22891"/>
<dbReference type="OpenTargets" id="ENSG00000126231"/>
<dbReference type="Orphanet" id="329217">
    <property type="disease" value="Cerebral sinovenous thrombosis"/>
</dbReference>
<dbReference type="PharmGKB" id="PA33813"/>
<dbReference type="VEuPathDB" id="HostDB:ENSG00000126231"/>
<dbReference type="eggNOG" id="KOG3627">
    <property type="taxonomic scope" value="Eukaryota"/>
</dbReference>
<dbReference type="GeneTree" id="ENSGT00940000154505"/>
<dbReference type="HOGENOM" id="CLU_006842_19_5_1"/>
<dbReference type="InParanoid" id="P22891"/>
<dbReference type="OMA" id="KNECHHH"/>
<dbReference type="OrthoDB" id="7726766at2759"/>
<dbReference type="PAN-GO" id="P22891">
    <property type="GO annotations" value="2 GO annotations based on evolutionary models"/>
</dbReference>
<dbReference type="PhylomeDB" id="P22891"/>
<dbReference type="TreeFam" id="TF327329"/>
<dbReference type="PathwayCommons" id="P22891"/>
<dbReference type="Reactome" id="R-HSA-159740">
    <property type="pathway name" value="Gamma-carboxylation of protein precursors"/>
</dbReference>
<dbReference type="Reactome" id="R-HSA-159763">
    <property type="pathway name" value="Transport of gamma-carboxylated protein precursors from the endoplasmic reticulum to the Golgi apparatus"/>
</dbReference>
<dbReference type="Reactome" id="R-HSA-159782">
    <property type="pathway name" value="Removal of aminoterminal propeptides from gamma-carboxylated proteins"/>
</dbReference>
<dbReference type="SignaLink" id="P22891"/>
<dbReference type="SIGNOR" id="P22891"/>
<dbReference type="BioGRID-ORCS" id="8858">
    <property type="hits" value="11 hits in 1145 CRISPR screens"/>
</dbReference>
<dbReference type="ChiTaRS" id="PROZ">
    <property type="organism name" value="human"/>
</dbReference>
<dbReference type="EvolutionaryTrace" id="P22891"/>
<dbReference type="GenomeRNAi" id="8858"/>
<dbReference type="Pharos" id="P22891">
    <property type="development level" value="Tbio"/>
</dbReference>
<dbReference type="PRO" id="PR:P22891"/>
<dbReference type="Proteomes" id="UP000005640">
    <property type="component" value="Chromosome 13"/>
</dbReference>
<dbReference type="RNAct" id="P22891">
    <property type="molecule type" value="protein"/>
</dbReference>
<dbReference type="Bgee" id="ENSG00000126231">
    <property type="expression patterns" value="Expressed in right lobe of liver and 99 other cell types or tissues"/>
</dbReference>
<dbReference type="GO" id="GO:0005788">
    <property type="term" value="C:endoplasmic reticulum lumen"/>
    <property type="evidence" value="ECO:0000304"/>
    <property type="project" value="Reactome"/>
</dbReference>
<dbReference type="GO" id="GO:0070062">
    <property type="term" value="C:extracellular exosome"/>
    <property type="evidence" value="ECO:0007005"/>
    <property type="project" value="UniProtKB"/>
</dbReference>
<dbReference type="GO" id="GO:0005615">
    <property type="term" value="C:extracellular space"/>
    <property type="evidence" value="ECO:0000318"/>
    <property type="project" value="GO_Central"/>
</dbReference>
<dbReference type="GO" id="GO:0005796">
    <property type="term" value="C:Golgi lumen"/>
    <property type="evidence" value="ECO:0000304"/>
    <property type="project" value="Reactome"/>
</dbReference>
<dbReference type="GO" id="GO:0005509">
    <property type="term" value="F:calcium ion binding"/>
    <property type="evidence" value="ECO:0007669"/>
    <property type="project" value="InterPro"/>
</dbReference>
<dbReference type="GO" id="GO:0004252">
    <property type="term" value="F:serine-type endopeptidase activity"/>
    <property type="evidence" value="ECO:0000318"/>
    <property type="project" value="GO_Central"/>
</dbReference>
<dbReference type="GO" id="GO:0007596">
    <property type="term" value="P:blood coagulation"/>
    <property type="evidence" value="ECO:0000318"/>
    <property type="project" value="GO_Central"/>
</dbReference>
<dbReference type="GO" id="GO:0006508">
    <property type="term" value="P:proteolysis"/>
    <property type="evidence" value="ECO:0007669"/>
    <property type="project" value="InterPro"/>
</dbReference>
<dbReference type="CDD" id="cd00054">
    <property type="entry name" value="EGF_CA"/>
    <property type="match status" value="1"/>
</dbReference>
<dbReference type="FunFam" id="2.10.25.10:FF:000162">
    <property type="entry name" value="Coagulation factor X (Predicted)"/>
    <property type="match status" value="1"/>
</dbReference>
<dbReference type="FunFam" id="2.10.25.10:FF:000480">
    <property type="entry name" value="Protein Z, vitamin K-dependent plasma glycoprotein"/>
    <property type="match status" value="1"/>
</dbReference>
<dbReference type="FunFam" id="2.40.10.10:FF:000114">
    <property type="entry name" value="Protein Z, vitamin K-dependent plasma glycoprotein"/>
    <property type="match status" value="1"/>
</dbReference>
<dbReference type="FunFam" id="2.40.10.10:FF:000117">
    <property type="entry name" value="Protein Z, vitamin K-dependent plasma glycoprotein"/>
    <property type="match status" value="1"/>
</dbReference>
<dbReference type="FunFam" id="4.10.740.10:FF:000001">
    <property type="entry name" value="vitamin K-dependent protein S"/>
    <property type="match status" value="1"/>
</dbReference>
<dbReference type="Gene3D" id="4.10.740.10">
    <property type="entry name" value="Coagulation Factor IX"/>
    <property type="match status" value="1"/>
</dbReference>
<dbReference type="Gene3D" id="2.10.25.10">
    <property type="entry name" value="Laminin"/>
    <property type="match status" value="2"/>
</dbReference>
<dbReference type="Gene3D" id="2.40.10.10">
    <property type="entry name" value="Trypsin-like serine proteases"/>
    <property type="match status" value="2"/>
</dbReference>
<dbReference type="InterPro" id="IPR017857">
    <property type="entry name" value="Coagulation_fac-like_Gla_dom"/>
</dbReference>
<dbReference type="InterPro" id="IPR001881">
    <property type="entry name" value="EGF-like_Ca-bd_dom"/>
</dbReference>
<dbReference type="InterPro" id="IPR000742">
    <property type="entry name" value="EGF-like_dom"/>
</dbReference>
<dbReference type="InterPro" id="IPR000152">
    <property type="entry name" value="EGF-type_Asp/Asn_hydroxyl_site"/>
</dbReference>
<dbReference type="InterPro" id="IPR035972">
    <property type="entry name" value="GLA-like_dom_SF"/>
</dbReference>
<dbReference type="InterPro" id="IPR000294">
    <property type="entry name" value="GLA_domain"/>
</dbReference>
<dbReference type="InterPro" id="IPR012224">
    <property type="entry name" value="Pept_S1A_FX"/>
</dbReference>
<dbReference type="InterPro" id="IPR050442">
    <property type="entry name" value="Peptidase_S1_coag_factors"/>
</dbReference>
<dbReference type="InterPro" id="IPR009003">
    <property type="entry name" value="Peptidase_S1_PA"/>
</dbReference>
<dbReference type="InterPro" id="IPR043504">
    <property type="entry name" value="Peptidase_S1_PA_chymotrypsin"/>
</dbReference>
<dbReference type="InterPro" id="IPR001254">
    <property type="entry name" value="Trypsin_dom"/>
</dbReference>
<dbReference type="PANTHER" id="PTHR24278">
    <property type="entry name" value="COAGULATION FACTOR"/>
    <property type="match status" value="1"/>
</dbReference>
<dbReference type="PANTHER" id="PTHR24278:SF20">
    <property type="entry name" value="VITAMIN K-DEPENDENT PROTEIN Z"/>
    <property type="match status" value="1"/>
</dbReference>
<dbReference type="Pfam" id="PF00008">
    <property type="entry name" value="EGF"/>
    <property type="match status" value="1"/>
</dbReference>
<dbReference type="Pfam" id="PF14670">
    <property type="entry name" value="FXa_inhibition"/>
    <property type="match status" value="1"/>
</dbReference>
<dbReference type="Pfam" id="PF00594">
    <property type="entry name" value="Gla"/>
    <property type="match status" value="1"/>
</dbReference>
<dbReference type="Pfam" id="PF00089">
    <property type="entry name" value="Trypsin"/>
    <property type="match status" value="1"/>
</dbReference>
<dbReference type="PIRSF" id="PIRSF001143">
    <property type="entry name" value="Factor_X"/>
    <property type="match status" value="1"/>
</dbReference>
<dbReference type="PRINTS" id="PR00001">
    <property type="entry name" value="GLABLOOD"/>
</dbReference>
<dbReference type="SMART" id="SM00181">
    <property type="entry name" value="EGF"/>
    <property type="match status" value="2"/>
</dbReference>
<dbReference type="SMART" id="SM00179">
    <property type="entry name" value="EGF_CA"/>
    <property type="match status" value="2"/>
</dbReference>
<dbReference type="SMART" id="SM00069">
    <property type="entry name" value="GLA"/>
    <property type="match status" value="1"/>
</dbReference>
<dbReference type="SMART" id="SM00020">
    <property type="entry name" value="Tryp_SPc"/>
    <property type="match status" value="1"/>
</dbReference>
<dbReference type="SUPFAM" id="SSF57196">
    <property type="entry name" value="EGF/Laminin"/>
    <property type="match status" value="1"/>
</dbReference>
<dbReference type="SUPFAM" id="SSF57630">
    <property type="entry name" value="GLA-domain"/>
    <property type="match status" value="1"/>
</dbReference>
<dbReference type="SUPFAM" id="SSF50494">
    <property type="entry name" value="Trypsin-like serine proteases"/>
    <property type="match status" value="1"/>
</dbReference>
<dbReference type="PROSITE" id="PS00010">
    <property type="entry name" value="ASX_HYDROXYL"/>
    <property type="match status" value="1"/>
</dbReference>
<dbReference type="PROSITE" id="PS00022">
    <property type="entry name" value="EGF_1"/>
    <property type="match status" value="1"/>
</dbReference>
<dbReference type="PROSITE" id="PS01186">
    <property type="entry name" value="EGF_2"/>
    <property type="match status" value="2"/>
</dbReference>
<dbReference type="PROSITE" id="PS50026">
    <property type="entry name" value="EGF_3"/>
    <property type="match status" value="1"/>
</dbReference>
<dbReference type="PROSITE" id="PS00011">
    <property type="entry name" value="GLA_1"/>
    <property type="match status" value="1"/>
</dbReference>
<dbReference type="PROSITE" id="PS50998">
    <property type="entry name" value="GLA_2"/>
    <property type="match status" value="1"/>
</dbReference>
<dbReference type="PROSITE" id="PS50240">
    <property type="entry name" value="TRYPSIN_DOM"/>
    <property type="match status" value="1"/>
</dbReference>
<evidence type="ECO:0000250" key="1"/>
<evidence type="ECO:0000255" key="2"/>
<evidence type="ECO:0000255" key="3">
    <source>
        <dbReference type="PROSITE-ProRule" id="PRU00076"/>
    </source>
</evidence>
<evidence type="ECO:0000255" key="4">
    <source>
        <dbReference type="PROSITE-ProRule" id="PRU00274"/>
    </source>
</evidence>
<evidence type="ECO:0000255" key="5">
    <source>
        <dbReference type="PROSITE-ProRule" id="PRU00463"/>
    </source>
</evidence>
<evidence type="ECO:0000269" key="6">
    <source>
    </source>
</evidence>
<evidence type="ECO:0000269" key="7">
    <source>
    </source>
</evidence>
<evidence type="ECO:0000269" key="8">
    <source>
    </source>
</evidence>
<evidence type="ECO:0000269" key="9">
    <source>
    </source>
</evidence>
<evidence type="ECO:0000269" key="10">
    <source>
    </source>
</evidence>
<evidence type="ECO:0000269" key="11">
    <source ref="3"/>
</evidence>
<evidence type="ECO:0000305" key="12"/>
<evidence type="ECO:0007829" key="13">
    <source>
        <dbReference type="PDB" id="3F1S"/>
    </source>
</evidence>
<evidence type="ECO:0007829" key="14">
    <source>
        <dbReference type="PDB" id="3H5C"/>
    </source>
</evidence>
<gene>
    <name type="primary">PROZ</name>
</gene>
<sequence length="400" mass="44744">MAGCVPLLQGLVLVLALHRVEPSVFLPASKANDVLVRWKRAGSYLLEELFEGNLEKECYEEICVYEEAREVFENEVVTDEFWRRYKGGSPCISQPCLHNGSCQDSIWGYTCTCSPGYEGSNCELAKNECHPERTDGCQHFCLPGQESYTCSCAQGYRLGEDHKQCVPHDQCACGVLTSEKRAPDLQDLPWQVKLTNSEGKDFCGGVIIRENFVLTTAKCSLLHRNITVKTYFNRTSQDPLMIKITHVHVHMRYDADAGENDLSLLELEWPIQCPGAGLPVCTPEKDFAEHLLIPRTRGLLSGWARNGTDLGNSLTTRPVTLVEGEECGQVLNVTVTTRTYCERSSVAAMHWMDGSVVTREHRGSWFLTGVLGSQPVGGQAHMVLVTKVSRYSLWFKQIMN</sequence>
<name>PROZ_HUMAN</name>
<organism>
    <name type="scientific">Homo sapiens</name>
    <name type="common">Human</name>
    <dbReference type="NCBI Taxonomy" id="9606"/>
    <lineage>
        <taxon>Eukaryota</taxon>
        <taxon>Metazoa</taxon>
        <taxon>Chordata</taxon>
        <taxon>Craniata</taxon>
        <taxon>Vertebrata</taxon>
        <taxon>Euteleostomi</taxon>
        <taxon>Mammalia</taxon>
        <taxon>Eutheria</taxon>
        <taxon>Euarchontoglires</taxon>
        <taxon>Primates</taxon>
        <taxon>Haplorrhini</taxon>
        <taxon>Catarrhini</taxon>
        <taxon>Hominidae</taxon>
        <taxon>Homo</taxon>
    </lineage>
</organism>
<keyword id="KW-0002">3D-structure</keyword>
<keyword id="KW-0025">Alternative splicing</keyword>
<keyword id="KW-0094">Blood coagulation</keyword>
<keyword id="KW-0106">Calcium</keyword>
<keyword id="KW-0165">Cleavage on pair of basic residues</keyword>
<keyword id="KW-0903">Direct protein sequencing</keyword>
<keyword id="KW-1015">Disulfide bond</keyword>
<keyword id="KW-0245">EGF-like domain</keyword>
<keyword id="KW-0301">Gamma-carboxyglutamic acid</keyword>
<keyword id="KW-0325">Glycoprotein</keyword>
<keyword id="KW-0356">Hemostasis</keyword>
<keyword id="KW-0379">Hydroxylation</keyword>
<keyword id="KW-1267">Proteomics identification</keyword>
<keyword id="KW-1185">Reference proteome</keyword>
<keyword id="KW-0677">Repeat</keyword>
<keyword id="KW-0964">Secreted</keyword>
<keyword id="KW-0721">Serine protease homolog</keyword>
<keyword id="KW-0732">Signal</keyword>
<proteinExistence type="evidence at protein level"/>